<gene>
    <name evidence="1" type="primary">NS</name>
</gene>
<organism>
    <name type="scientific">Influenza A virus (strain A/Silky Chicken/Hong Kong/YU100/2002 H5N1 genotype X3)</name>
    <dbReference type="NCBI Taxonomy" id="284214"/>
    <lineage>
        <taxon>Viruses</taxon>
        <taxon>Riboviria</taxon>
        <taxon>Orthornavirae</taxon>
        <taxon>Negarnaviricota</taxon>
        <taxon>Polyploviricotina</taxon>
        <taxon>Insthoviricetes</taxon>
        <taxon>Articulavirales</taxon>
        <taxon>Orthomyxoviridae</taxon>
        <taxon>Alphainfluenzavirus</taxon>
        <taxon>Alphainfluenzavirus influenzae</taxon>
        <taxon>Influenza A virus</taxon>
    </lineage>
</organism>
<evidence type="ECO:0000255" key="1">
    <source>
        <dbReference type="HAMAP-Rule" id="MF_04066"/>
    </source>
</evidence>
<evidence type="ECO:0000256" key="2">
    <source>
        <dbReference type="SAM" id="MobiDB-lite"/>
    </source>
</evidence>
<proteinExistence type="inferred from homology"/>
<reference key="1">
    <citation type="journal article" date="2004" name="Nature">
        <title>Genesis of a highly pathogenic and potentially pandemic H5N1 influenza virus in eastern Asia.</title>
        <authorList>
            <person name="Li K.S."/>
            <person name="Guan Y."/>
            <person name="Wang J."/>
            <person name="Smith G.J.D."/>
            <person name="Xu K.M."/>
            <person name="Duan L."/>
            <person name="Rahardjo A.P."/>
            <person name="Puthavathana P."/>
            <person name="Buranathai C."/>
            <person name="Nguyen T.D."/>
            <person name="Estoepangestie A.T.S."/>
            <person name="Chaisingh A."/>
            <person name="Auewarakul P."/>
            <person name="Long H.T."/>
            <person name="Hanh N.T.H."/>
            <person name="Webby R.J."/>
            <person name="Poon L.L.M."/>
            <person name="Chen H."/>
            <person name="Shortridge K.F."/>
            <person name="Yuen K.Y."/>
            <person name="Webster R.G."/>
            <person name="Peiris J.S.M."/>
        </authorList>
    </citation>
    <scope>NUCLEOTIDE SEQUENCE [GENOMIC RNA]</scope>
</reference>
<organismHost>
    <name type="scientific">Aves</name>
    <dbReference type="NCBI Taxonomy" id="8782"/>
</organismHost>
<organismHost>
    <name type="scientific">Felis catus</name>
    <name type="common">Cat</name>
    <name type="synonym">Felis silvestris catus</name>
    <dbReference type="NCBI Taxonomy" id="9685"/>
</organismHost>
<organismHost>
    <name type="scientific">Homo sapiens</name>
    <name type="common">Human</name>
    <dbReference type="NCBI Taxonomy" id="9606"/>
</organismHost>
<organismHost>
    <name type="scientific">Panthera pardus</name>
    <name type="common">Leopard</name>
    <name type="synonym">Felis pardus</name>
    <dbReference type="NCBI Taxonomy" id="9691"/>
</organismHost>
<organismHost>
    <name type="scientific">Panthera tigris</name>
    <name type="common">Tiger</name>
    <dbReference type="NCBI Taxonomy" id="9694"/>
</organismHost>
<organismHost>
    <name type="scientific">Sus scrofa</name>
    <name type="common">Pig</name>
    <dbReference type="NCBI Taxonomy" id="9823"/>
</organismHost>
<sequence>MDSNTVSSFQVDCFLWHVRNRFADQELGDAPFLDRLRRDQKSLRGRASTLGVDIETATRAGKQIVERIMEKEFDEALKMTIASLSALRYLTDMTLEEMSRDWFMLMPKQKVAGSLCIRMDQAIMDKTIILKANFSVIFDRLETLILLRAFTEEGAIVGEISPLPSLPGHTDEDVKNAIGVLIGGLEWNDNTVRVSETLQRFAWRSSDEGGRPSLPPKQKRKMARTTESEV</sequence>
<feature type="chain" id="PRO_0000311750" description="Non-structural protein 1">
    <location>
        <begin position="1"/>
        <end position="230"/>
    </location>
</feature>
<feature type="region of interest" description="RNA-binding and homodimerization" evidence="1">
    <location>
        <begin position="1"/>
        <end position="73"/>
    </location>
</feature>
<feature type="region of interest" description="CPSF4-binding" evidence="1">
    <location>
        <begin position="180"/>
        <end position="215"/>
    </location>
</feature>
<feature type="region of interest" description="Disordered" evidence="2">
    <location>
        <begin position="205"/>
        <end position="230"/>
    </location>
</feature>
<feature type="region of interest" description="PABPN1-binding" evidence="1">
    <location>
        <begin position="223"/>
        <end position="230"/>
    </location>
</feature>
<feature type="short sequence motif" description="Nuclear localization signal" evidence="1">
    <location>
        <begin position="34"/>
        <end position="38"/>
    </location>
</feature>
<feature type="short sequence motif" description="Nuclear export signal" evidence="1">
    <location>
        <begin position="137"/>
        <end position="146"/>
    </location>
</feature>
<name>NS1_I02A4</name>
<comment type="function">
    <text evidence="1">Inhibits post-transcriptional processing of cellular pre-mRNA, by binding and inhibiting two cellular proteins that are required for the 3'-end processing of cellular pre-mRNAs: the 30 kDa cleavage and polyadenylation specificity factor/CPSF4 and the poly(A)-binding protein 2/PABPN1. In turn, unprocessed 3' end pre-mRNAs accumulate in the host nucleus and are no longer exported to the cytoplasm. Cellular protein synthesis is thereby shut off very early after virus infection. Viral protein synthesis is not affected by the inhibition of the cellular 3' end processing machinery because the poly(A) tails of viral mRNAs are produced by the viral polymerase through a stuttering mechanism. Prevents the establishment of the cellular antiviral state by inhibiting TRIM25-mediated RIGI ubiquitination, which normally triggers the antiviral transduction signal that leads to the activation of type I IFN genes by transcription factors IRF3 and IRF7. Also binds poly(A) and U6 snRNA. Inhibits the integrated stress response (ISR) in the infected cell by blocking dsRNA binding by EIF2AK2/PKR and further phosphorylation of EIF2S1/EIF-2ALPHA. Stress granule formation is thus inhibited, which allows protein synthesis and viral replication.</text>
</comment>
<comment type="subunit">
    <text evidence="1">Homodimer. Interacts with host TRIM25 (via coiled coil); this interaction specifically inhibits TRIM25 multimerization and TRIM25-mediated RIGI CARD ubiquitination. Interacts with human EIF2AK2/PKR, CPSF4, IVNS1ABP and PABPN1.</text>
</comment>
<comment type="subcellular location">
    <subcellularLocation>
        <location evidence="1">Host nucleus</location>
    </subcellularLocation>
    <subcellularLocation>
        <location evidence="1">Host cytoplasm</location>
    </subcellularLocation>
    <text evidence="1">In uninfected, transfected cells, NS1 is localized in the nucleus. Only in virus infected cells, the nuclear export signal is unveiled, presumably by a viral protein, and a fraction of NS1 is exported in the cytoplasm.</text>
</comment>
<comment type="alternative products">
    <event type="alternative splicing"/>
    <isoform>
        <id>Q6DP64-1</id>
        <name>NS1</name>
        <sequence type="displayed"/>
    </isoform>
    <isoform>
        <id>Q6DP65-1</id>
        <name>NEP</name>
        <name>NS2</name>
        <sequence type="external"/>
    </isoform>
</comment>
<comment type="domain">
    <text evidence="1">The dsRNA-binding region is required for suppression of RNA silencing.</text>
</comment>
<comment type="PTM">
    <text evidence="1">Upon interferon induction, ISGylated via host HERC5; this results in the impairment of NS1 interaction with RNA targets due to its inability to form homodimers and to interact with host EIF2AK2/PKR.</text>
</comment>
<comment type="similarity">
    <text evidence="1">Belongs to the influenza A viruses NS1 family.</text>
</comment>
<accession>Q6DP64</accession>
<keyword id="KW-0025">Alternative splicing</keyword>
<keyword id="KW-1262">Eukaryotic host gene expression shutoff by virus</keyword>
<keyword id="KW-1035">Host cytoplasm</keyword>
<keyword id="KW-1190">Host gene expression shutoff by virus</keyword>
<keyword id="KW-1192">Host mRNA suppression by virus</keyword>
<keyword id="KW-1048">Host nucleus</keyword>
<keyword id="KW-0945">Host-virus interaction</keyword>
<keyword id="KW-1090">Inhibition of host innate immune response by virus</keyword>
<keyword id="KW-1114">Inhibition of host interferon signaling pathway by virus</keyword>
<keyword id="KW-1102">Inhibition of host PKR by virus</keyword>
<keyword id="KW-1103">Inhibition of host pre-mRNA processing by virus</keyword>
<keyword id="KW-1088">Inhibition of host RIG-I by virus</keyword>
<keyword id="KW-1113">Inhibition of host RLR pathway by virus</keyword>
<keyword id="KW-0922">Interferon antiviral system evasion</keyword>
<keyword id="KW-0694">RNA-binding</keyword>
<keyword id="KW-0832">Ubl conjugation</keyword>
<keyword id="KW-0899">Viral immunoevasion</keyword>
<protein>
    <recommendedName>
        <fullName evidence="1">Non-structural protein 1</fullName>
        <shortName evidence="1">NS1</shortName>
    </recommendedName>
    <alternativeName>
        <fullName evidence="1">NS1A</fullName>
    </alternativeName>
</protein>
<dbReference type="EMBL" id="AY651567">
    <property type="protein sequence ID" value="AAT73423.1"/>
    <property type="molecule type" value="Genomic_RNA"/>
</dbReference>
<dbReference type="SMR" id="Q6DP64"/>
<dbReference type="GO" id="GO:0030430">
    <property type="term" value="C:host cell cytoplasm"/>
    <property type="evidence" value="ECO:0007669"/>
    <property type="project" value="UniProtKB-SubCell"/>
</dbReference>
<dbReference type="GO" id="GO:0042025">
    <property type="term" value="C:host cell nucleus"/>
    <property type="evidence" value="ECO:0007669"/>
    <property type="project" value="UniProtKB-SubCell"/>
</dbReference>
<dbReference type="GO" id="GO:0030291">
    <property type="term" value="F:protein serine/threonine kinase inhibitor activity"/>
    <property type="evidence" value="ECO:0007669"/>
    <property type="project" value="UniProtKB-KW"/>
</dbReference>
<dbReference type="GO" id="GO:0003723">
    <property type="term" value="F:RNA binding"/>
    <property type="evidence" value="ECO:0007669"/>
    <property type="project" value="UniProtKB-KW"/>
</dbReference>
<dbReference type="GO" id="GO:0039540">
    <property type="term" value="P:symbiont-mediated suppression of host cytoplasmic pattern recognition receptor signaling pathway via inhibition of RIG-I activity"/>
    <property type="evidence" value="ECO:0007669"/>
    <property type="project" value="UniProtKB-KW"/>
</dbReference>
<dbReference type="GO" id="GO:0039657">
    <property type="term" value="P:symbiont-mediated suppression of host gene expression"/>
    <property type="evidence" value="ECO:0007669"/>
    <property type="project" value="UniProtKB-KW"/>
</dbReference>
<dbReference type="GO" id="GO:0039524">
    <property type="term" value="P:symbiont-mediated suppression of host mRNA processing"/>
    <property type="evidence" value="ECO:0007669"/>
    <property type="project" value="UniProtKB-KW"/>
</dbReference>
<dbReference type="GO" id="GO:0039580">
    <property type="term" value="P:symbiont-mediated suppression of host PKR/eIFalpha signaling"/>
    <property type="evidence" value="ECO:0007669"/>
    <property type="project" value="UniProtKB-KW"/>
</dbReference>
<dbReference type="GO" id="GO:0039502">
    <property type="term" value="P:symbiont-mediated suppression of host type I interferon-mediated signaling pathway"/>
    <property type="evidence" value="ECO:0007669"/>
    <property type="project" value="UniProtKB-KW"/>
</dbReference>
<dbReference type="FunFam" id="1.10.287.10:FF:000001">
    <property type="entry name" value="Non-structural protein 1"/>
    <property type="match status" value="1"/>
</dbReference>
<dbReference type="FunFam" id="3.30.420.330:FF:000001">
    <property type="entry name" value="Non-structural protein 1"/>
    <property type="match status" value="1"/>
</dbReference>
<dbReference type="Gene3D" id="3.30.420.330">
    <property type="entry name" value="Influenza virus non-structural protein, effector domain"/>
    <property type="match status" value="1"/>
</dbReference>
<dbReference type="Gene3D" id="1.10.287.10">
    <property type="entry name" value="S15/NS1, RNA-binding"/>
    <property type="match status" value="1"/>
</dbReference>
<dbReference type="HAMAP" id="MF_04066">
    <property type="entry name" value="INFV_NS1"/>
    <property type="match status" value="1"/>
</dbReference>
<dbReference type="InterPro" id="IPR004208">
    <property type="entry name" value="NS1"/>
</dbReference>
<dbReference type="InterPro" id="IPR000256">
    <property type="entry name" value="NS1A"/>
</dbReference>
<dbReference type="InterPro" id="IPR038064">
    <property type="entry name" value="NS1A_effect_dom-like_sf"/>
</dbReference>
<dbReference type="InterPro" id="IPR009068">
    <property type="entry name" value="uS15_NS1_RNA-bd_sf"/>
</dbReference>
<dbReference type="Pfam" id="PF00600">
    <property type="entry name" value="Flu_NS1"/>
    <property type="match status" value="1"/>
</dbReference>
<dbReference type="SUPFAM" id="SSF143021">
    <property type="entry name" value="Ns1 effector domain-like"/>
    <property type="match status" value="1"/>
</dbReference>
<dbReference type="SUPFAM" id="SSF47060">
    <property type="entry name" value="S15/NS1 RNA-binding domain"/>
    <property type="match status" value="1"/>
</dbReference>